<reference key="1">
    <citation type="journal article" date="2005" name="J. Bacteriol.">
        <title>Swine and poultry pathogens: the complete genome sequences of two strains of Mycoplasma hyopneumoniae and a strain of Mycoplasma synoviae.</title>
        <authorList>
            <person name="Vasconcelos A.T.R."/>
            <person name="Ferreira H.B."/>
            <person name="Bizarro C.V."/>
            <person name="Bonatto S.L."/>
            <person name="Carvalho M.O."/>
            <person name="Pinto P.M."/>
            <person name="Almeida D.F."/>
            <person name="Almeida L.G.P."/>
            <person name="Almeida R."/>
            <person name="Alves-Junior L."/>
            <person name="Assuncao E.N."/>
            <person name="Azevedo V.A.C."/>
            <person name="Bogo M.R."/>
            <person name="Brigido M.M."/>
            <person name="Brocchi M."/>
            <person name="Burity H.A."/>
            <person name="Camargo A.A."/>
            <person name="Camargo S.S."/>
            <person name="Carepo M.S."/>
            <person name="Carraro D.M."/>
            <person name="de Mattos Cascardo J.C."/>
            <person name="Castro L.A."/>
            <person name="Cavalcanti G."/>
            <person name="Chemale G."/>
            <person name="Collevatti R.G."/>
            <person name="Cunha C.W."/>
            <person name="Dallagiovanna B."/>
            <person name="Dambros B.P."/>
            <person name="Dellagostin O.A."/>
            <person name="Falcao C."/>
            <person name="Fantinatti-Garboggini F."/>
            <person name="Felipe M.S.S."/>
            <person name="Fiorentin L."/>
            <person name="Franco G.R."/>
            <person name="Freitas N.S.A."/>
            <person name="Frias D."/>
            <person name="Grangeiro T.B."/>
            <person name="Grisard E.C."/>
            <person name="Guimaraes C.T."/>
            <person name="Hungria M."/>
            <person name="Jardim S.N."/>
            <person name="Krieger M.A."/>
            <person name="Laurino J.P."/>
            <person name="Lima L.F.A."/>
            <person name="Lopes M.I."/>
            <person name="Loreto E.L.S."/>
            <person name="Madeira H.M.F."/>
            <person name="Manfio G.P."/>
            <person name="Maranhao A.Q."/>
            <person name="Martinkovics C.T."/>
            <person name="Medeiros S.R.B."/>
            <person name="Moreira M.A.M."/>
            <person name="Neiva M."/>
            <person name="Ramalho-Neto C.E."/>
            <person name="Nicolas M.F."/>
            <person name="Oliveira S.C."/>
            <person name="Paixao R.F.C."/>
            <person name="Pedrosa F.O."/>
            <person name="Pena S.D.J."/>
            <person name="Pereira M."/>
            <person name="Pereira-Ferrari L."/>
            <person name="Piffer I."/>
            <person name="Pinto L.S."/>
            <person name="Potrich D.P."/>
            <person name="Salim A.C.M."/>
            <person name="Santos F.R."/>
            <person name="Schmitt R."/>
            <person name="Schneider M.P.C."/>
            <person name="Schrank A."/>
            <person name="Schrank I.S."/>
            <person name="Schuck A.F."/>
            <person name="Seuanez H.N."/>
            <person name="Silva D.W."/>
            <person name="Silva R."/>
            <person name="Silva S.C."/>
            <person name="Soares C.M.A."/>
            <person name="Souza K.R.L."/>
            <person name="Souza R.C."/>
            <person name="Staats C.C."/>
            <person name="Steffens M.B.R."/>
            <person name="Teixeira S.M.R."/>
            <person name="Urmenyi T.P."/>
            <person name="Vainstein M.H."/>
            <person name="Zuccherato L.W."/>
            <person name="Simpson A.J.G."/>
            <person name="Zaha A."/>
        </authorList>
    </citation>
    <scope>NUCLEOTIDE SEQUENCE [LARGE SCALE GENOMIC DNA]</scope>
    <source>
        <strain>53</strain>
    </source>
</reference>
<comment type="function">
    <text evidence="1">F(1)F(0) ATP synthase produces ATP from ADP in the presence of a proton or sodium gradient. F-type ATPases consist of two structural domains, F(1) containing the extramembraneous catalytic core and F(0) containing the membrane proton channel, linked together by a central stalk and a peripheral stalk. During catalysis, ATP synthesis in the catalytic domain of F(1) is coupled via a rotary mechanism of the central stalk subunits to proton translocation.</text>
</comment>
<comment type="function">
    <text evidence="1">Key component of the F(0) channel; it plays a direct role in translocation across the membrane. A homomeric c-ring of between 10-14 subunits forms the central stalk rotor element with the F(1) delta and epsilon subunits.</text>
</comment>
<comment type="subunit">
    <text evidence="1">F-type ATPases have 2 components, F(1) - the catalytic core - and F(0) - the membrane proton channel. F(1) has five subunits: alpha(3), beta(3), gamma(1), delta(1), epsilon(1). F(0) has three main subunits: a(1), b(2) and c(10-14). The alpha and beta chains form an alternating ring which encloses part of the gamma chain. F(1) is attached to F(0) by a central stalk formed by the gamma and epsilon chains, while a peripheral stalk is formed by the delta and b chains.</text>
</comment>
<comment type="subcellular location">
    <subcellularLocation>
        <location evidence="1">Cell membrane</location>
        <topology evidence="1">Multi-pass membrane protein</topology>
    </subcellularLocation>
</comment>
<comment type="similarity">
    <text evidence="1">Belongs to the ATPase C chain family.</text>
</comment>
<evidence type="ECO:0000255" key="1">
    <source>
        <dbReference type="HAMAP-Rule" id="MF_01396"/>
    </source>
</evidence>
<organism>
    <name type="scientific">Mycoplasmopsis synoviae (strain 53)</name>
    <name type="common">Mycoplasma synoviae</name>
    <dbReference type="NCBI Taxonomy" id="262723"/>
    <lineage>
        <taxon>Bacteria</taxon>
        <taxon>Bacillati</taxon>
        <taxon>Mycoplasmatota</taxon>
        <taxon>Mycoplasmoidales</taxon>
        <taxon>Metamycoplasmataceae</taxon>
        <taxon>Mycoplasmopsis</taxon>
    </lineage>
</organism>
<keyword id="KW-0066">ATP synthesis</keyword>
<keyword id="KW-1003">Cell membrane</keyword>
<keyword id="KW-0138">CF(0)</keyword>
<keyword id="KW-0375">Hydrogen ion transport</keyword>
<keyword id="KW-0406">Ion transport</keyword>
<keyword id="KW-0446">Lipid-binding</keyword>
<keyword id="KW-0472">Membrane</keyword>
<keyword id="KW-1185">Reference proteome</keyword>
<keyword id="KW-0812">Transmembrane</keyword>
<keyword id="KW-1133">Transmembrane helix</keyword>
<keyword id="KW-0813">Transport</keyword>
<dbReference type="EMBL" id="AE017245">
    <property type="protein sequence ID" value="AAZ43822.2"/>
    <property type="molecule type" value="Genomic_DNA"/>
</dbReference>
<dbReference type="RefSeq" id="WP_020003251.1">
    <property type="nucleotide sequence ID" value="NC_007294.1"/>
</dbReference>
<dbReference type="SMR" id="Q4A5Z9"/>
<dbReference type="STRING" id="262723.MS53_0410"/>
<dbReference type="GeneID" id="93530193"/>
<dbReference type="KEGG" id="msy:MS53_0410"/>
<dbReference type="eggNOG" id="COG0636">
    <property type="taxonomic scope" value="Bacteria"/>
</dbReference>
<dbReference type="HOGENOM" id="CLU_148047_2_2_14"/>
<dbReference type="OrthoDB" id="9810379at2"/>
<dbReference type="Proteomes" id="UP000000549">
    <property type="component" value="Chromosome"/>
</dbReference>
<dbReference type="GO" id="GO:0005886">
    <property type="term" value="C:plasma membrane"/>
    <property type="evidence" value="ECO:0007669"/>
    <property type="project" value="UniProtKB-SubCell"/>
</dbReference>
<dbReference type="GO" id="GO:0045259">
    <property type="term" value="C:proton-transporting ATP synthase complex"/>
    <property type="evidence" value="ECO:0007669"/>
    <property type="project" value="UniProtKB-KW"/>
</dbReference>
<dbReference type="GO" id="GO:0033177">
    <property type="term" value="C:proton-transporting two-sector ATPase complex, proton-transporting domain"/>
    <property type="evidence" value="ECO:0007669"/>
    <property type="project" value="InterPro"/>
</dbReference>
<dbReference type="GO" id="GO:0008289">
    <property type="term" value="F:lipid binding"/>
    <property type="evidence" value="ECO:0007669"/>
    <property type="project" value="UniProtKB-KW"/>
</dbReference>
<dbReference type="GO" id="GO:0046933">
    <property type="term" value="F:proton-transporting ATP synthase activity, rotational mechanism"/>
    <property type="evidence" value="ECO:0007669"/>
    <property type="project" value="UniProtKB-UniRule"/>
</dbReference>
<dbReference type="CDD" id="cd18184">
    <property type="entry name" value="ATP-synt_Fo_c_NaATPase"/>
    <property type="match status" value="1"/>
</dbReference>
<dbReference type="FunFam" id="1.20.20.10:FF:000002">
    <property type="entry name" value="ATP synthase subunit c"/>
    <property type="match status" value="1"/>
</dbReference>
<dbReference type="Gene3D" id="1.20.120.610">
    <property type="entry name" value="lithium bound rotor ring of v- atpase"/>
    <property type="match status" value="1"/>
</dbReference>
<dbReference type="HAMAP" id="MF_01396">
    <property type="entry name" value="ATP_synth_c_bact"/>
    <property type="match status" value="1"/>
</dbReference>
<dbReference type="InterPro" id="IPR005953">
    <property type="entry name" value="ATP_synth_csu_bac/chlpt"/>
</dbReference>
<dbReference type="InterPro" id="IPR000454">
    <property type="entry name" value="ATP_synth_F0_csu"/>
</dbReference>
<dbReference type="InterPro" id="IPR020537">
    <property type="entry name" value="ATP_synth_F0_csu_DDCD_BS"/>
</dbReference>
<dbReference type="InterPro" id="IPR002379">
    <property type="entry name" value="ATPase_proteolipid_c-like_dom"/>
</dbReference>
<dbReference type="InterPro" id="IPR035921">
    <property type="entry name" value="F/V-ATP_Csub_sf"/>
</dbReference>
<dbReference type="NCBIfam" id="TIGR01260">
    <property type="entry name" value="ATP_synt_c"/>
    <property type="match status" value="1"/>
</dbReference>
<dbReference type="PANTHER" id="PTHR10031">
    <property type="entry name" value="ATP SYNTHASE LIPID-BINDING PROTEIN, MITOCHONDRIAL"/>
    <property type="match status" value="1"/>
</dbReference>
<dbReference type="PANTHER" id="PTHR10031:SF0">
    <property type="entry name" value="ATPASE PROTEIN 9"/>
    <property type="match status" value="1"/>
</dbReference>
<dbReference type="Pfam" id="PF00137">
    <property type="entry name" value="ATP-synt_C"/>
    <property type="match status" value="1"/>
</dbReference>
<dbReference type="PRINTS" id="PR00124">
    <property type="entry name" value="ATPASEC"/>
</dbReference>
<dbReference type="SUPFAM" id="SSF81333">
    <property type="entry name" value="F1F0 ATP synthase subunit C"/>
    <property type="match status" value="1"/>
</dbReference>
<dbReference type="PROSITE" id="PS00605">
    <property type="entry name" value="ATPASE_C"/>
    <property type="match status" value="1"/>
</dbReference>
<sequence>MNQLQNLAEALSASSPVSGTVQTVVDGNTTTTTTTNTGLGVVAVGAGLAMIGAIGSGLGQGYAAGKTVEAVGRNPEMISKIRATFIIGAGIAETASIYSFIVALLLIFVGK</sequence>
<protein>
    <recommendedName>
        <fullName evidence="1">ATP synthase subunit c</fullName>
    </recommendedName>
    <alternativeName>
        <fullName evidence="1">ATP synthase F(0) sector subunit c</fullName>
    </alternativeName>
    <alternativeName>
        <fullName evidence="1">F-type ATPase subunit c</fullName>
        <shortName evidence="1">F-ATPase subunit c</shortName>
    </alternativeName>
    <alternativeName>
        <fullName evidence="1">Lipid-binding protein</fullName>
    </alternativeName>
</protein>
<accession>Q4A5Z9</accession>
<name>ATPL_MYCS5</name>
<gene>
    <name evidence="1" type="primary">atpE</name>
    <name type="ordered locus">MS53_0410</name>
</gene>
<proteinExistence type="inferred from homology"/>
<feature type="chain" id="PRO_0000365905" description="ATP synthase subunit c">
    <location>
        <begin position="1"/>
        <end position="111"/>
    </location>
</feature>
<feature type="transmembrane region" description="Helical" evidence="1">
    <location>
        <begin position="38"/>
        <end position="58"/>
    </location>
</feature>
<feature type="transmembrane region" description="Helical" evidence="1">
    <location>
        <begin position="89"/>
        <end position="109"/>
    </location>
</feature>
<feature type="site" description="Reversibly protonated during proton transport" evidence="1">
    <location>
        <position position="93"/>
    </location>
</feature>